<protein>
    <recommendedName>
        <fullName evidence="1">Polyribonucleotide nucleotidyltransferase</fullName>
        <ecNumber evidence="1">2.7.7.8</ecNumber>
    </recommendedName>
    <alternativeName>
        <fullName evidence="1">Polynucleotide phosphorylase</fullName>
        <shortName evidence="1">PNPase</shortName>
    </alternativeName>
</protein>
<feature type="chain" id="PRO_0000450349" description="Polyribonucleotide nucleotidyltransferase">
    <location>
        <begin position="1"/>
        <end position="711"/>
    </location>
</feature>
<feature type="domain" description="KH" evidence="1">
    <location>
        <begin position="553"/>
        <end position="612"/>
    </location>
</feature>
<feature type="domain" description="S1 motif" evidence="1">
    <location>
        <begin position="622"/>
        <end position="690"/>
    </location>
</feature>
<feature type="region of interest" description="Disordered" evidence="2">
    <location>
        <begin position="690"/>
        <end position="711"/>
    </location>
</feature>
<feature type="compositionally biased region" description="Low complexity" evidence="2">
    <location>
        <begin position="694"/>
        <end position="711"/>
    </location>
</feature>
<feature type="binding site" evidence="1">
    <location>
        <position position="486"/>
    </location>
    <ligand>
        <name>Mg(2+)</name>
        <dbReference type="ChEBI" id="CHEBI:18420"/>
    </ligand>
</feature>
<feature type="binding site" evidence="1">
    <location>
        <position position="492"/>
    </location>
    <ligand>
        <name>Mg(2+)</name>
        <dbReference type="ChEBI" id="CHEBI:18420"/>
    </ligand>
</feature>
<comment type="function">
    <text evidence="1 3">Involved in mRNA degradation. Catalyzes the phosphorolysis of single-stranded polyribonucleotides processively in the 3'- to 5'-direction (By similarity). Involved in decay of speF mRNA (PubMed:30742606).</text>
</comment>
<comment type="catalytic activity">
    <reaction evidence="1">
        <text>RNA(n+1) + phosphate = RNA(n) + a ribonucleoside 5'-diphosphate</text>
        <dbReference type="Rhea" id="RHEA:22096"/>
        <dbReference type="Rhea" id="RHEA-COMP:14527"/>
        <dbReference type="Rhea" id="RHEA-COMP:17342"/>
        <dbReference type="ChEBI" id="CHEBI:43474"/>
        <dbReference type="ChEBI" id="CHEBI:57930"/>
        <dbReference type="ChEBI" id="CHEBI:140395"/>
        <dbReference type="EC" id="2.7.7.8"/>
    </reaction>
</comment>
<comment type="cofactor">
    <cofactor evidence="1">
        <name>Mg(2+)</name>
        <dbReference type="ChEBI" id="CHEBI:18420"/>
    </cofactor>
</comment>
<comment type="subunit">
    <text evidence="1">Component of the RNA degradosome, which is a multiprotein complex involved in RNA processing and mRNA degradation.</text>
</comment>
<comment type="subcellular location">
    <subcellularLocation>
        <location evidence="1">Cytoplasm</location>
    </subcellularLocation>
</comment>
<comment type="disruption phenotype">
    <text evidence="3">Increased stability of speF mRNA.</text>
</comment>
<comment type="similarity">
    <text evidence="1">Belongs to the polyribonucleotide nucleotidyltransferase family.</text>
</comment>
<reference key="1">
    <citation type="journal article" date="2012" name="Proc. Natl. Acad. Sci. U.S.A.">
        <title>The transcriptional landscape and small RNAs of Salmonella enterica serovar Typhimurium.</title>
        <authorList>
            <person name="Kroger C."/>
            <person name="Dillon S.C."/>
            <person name="Cameron A.D."/>
            <person name="Papenfort K."/>
            <person name="Sivasankaran S.K."/>
            <person name="Hokamp K."/>
            <person name="Chao Y."/>
            <person name="Sittka A."/>
            <person name="Hebrard M."/>
            <person name="Handler K."/>
            <person name="Colgan A."/>
            <person name="Leekitcharoenphon P."/>
            <person name="Langridge G.C."/>
            <person name="Lohan A.J."/>
            <person name="Loftus B."/>
            <person name="Lucchini S."/>
            <person name="Ussery D.W."/>
            <person name="Dorman C.J."/>
            <person name="Thomson N.R."/>
            <person name="Vogel J."/>
            <person name="Hinton J.C."/>
        </authorList>
    </citation>
    <scope>NUCLEOTIDE SEQUENCE [LARGE SCALE GENOMIC DNA]</scope>
    <source>
        <strain>SL1344</strain>
    </source>
</reference>
<reference key="2">
    <citation type="journal article" date="2019" name="PLoS Genet.">
        <title>mRNA dynamics and alternative conformations adopted under low and high arginine concentrations control polyamine biosynthesis in Salmonella.</title>
        <authorList>
            <person name="Ben-Zvi T."/>
            <person name="Pushkarev A."/>
            <person name="Seri H."/>
            <person name="Elgrably-Weiss M."/>
            <person name="Papenfort K."/>
            <person name="Altuvia S."/>
        </authorList>
    </citation>
    <scope>FUNCTION</scope>
    <scope>DISRUPTION PHENOTYPE</scope>
    <source>
        <strain>SL1344</strain>
    </source>
</reference>
<organism>
    <name type="scientific">Salmonella typhimurium (strain SL1344)</name>
    <dbReference type="NCBI Taxonomy" id="216597"/>
    <lineage>
        <taxon>Bacteria</taxon>
        <taxon>Pseudomonadati</taxon>
        <taxon>Pseudomonadota</taxon>
        <taxon>Gammaproteobacteria</taxon>
        <taxon>Enterobacterales</taxon>
        <taxon>Enterobacteriaceae</taxon>
        <taxon>Salmonella</taxon>
    </lineage>
</organism>
<name>PNP_SALTS</name>
<proteinExistence type="inferred from homology"/>
<keyword id="KW-0963">Cytoplasm</keyword>
<keyword id="KW-0460">Magnesium</keyword>
<keyword id="KW-0479">Metal-binding</keyword>
<keyword id="KW-0548">Nucleotidyltransferase</keyword>
<keyword id="KW-0694">RNA-binding</keyword>
<keyword id="KW-0808">Transferase</keyword>
<evidence type="ECO:0000255" key="1">
    <source>
        <dbReference type="HAMAP-Rule" id="MF_01595"/>
    </source>
</evidence>
<evidence type="ECO:0000256" key="2">
    <source>
        <dbReference type="SAM" id="MobiDB-lite"/>
    </source>
</evidence>
<evidence type="ECO:0000269" key="3">
    <source>
    </source>
</evidence>
<evidence type="ECO:0000312" key="4">
    <source>
        <dbReference type="EMBL" id="CBW19351.1"/>
    </source>
</evidence>
<accession>A0A0H3NM73</accession>
<gene>
    <name evidence="1 4" type="primary">pnp</name>
    <name type="ordered locus">SL1344_3255</name>
</gene>
<dbReference type="EC" id="2.7.7.8" evidence="1"/>
<dbReference type="EMBL" id="FQ312003">
    <property type="protein sequence ID" value="CBW19351.1"/>
    <property type="molecule type" value="Genomic_DNA"/>
</dbReference>
<dbReference type="RefSeq" id="WP_001670767.1">
    <property type="nucleotide sequence ID" value="NZ_QASL01000026.1"/>
</dbReference>
<dbReference type="SMR" id="A0A0H3NM73"/>
<dbReference type="KEGG" id="sey:SL1344_3255"/>
<dbReference type="PATRIC" id="fig|216597.6.peg.3634"/>
<dbReference type="HOGENOM" id="CLU_004217_2_2_6"/>
<dbReference type="BioCyc" id="SENT216597:SL1344_RS16950-MONOMER"/>
<dbReference type="Proteomes" id="UP000008962">
    <property type="component" value="Chromosome"/>
</dbReference>
<dbReference type="GO" id="GO:0005829">
    <property type="term" value="C:cytosol"/>
    <property type="evidence" value="ECO:0007669"/>
    <property type="project" value="TreeGrafter"/>
</dbReference>
<dbReference type="GO" id="GO:0000175">
    <property type="term" value="F:3'-5'-RNA exonuclease activity"/>
    <property type="evidence" value="ECO:0007669"/>
    <property type="project" value="TreeGrafter"/>
</dbReference>
<dbReference type="GO" id="GO:0000287">
    <property type="term" value="F:magnesium ion binding"/>
    <property type="evidence" value="ECO:0007669"/>
    <property type="project" value="UniProtKB-UniRule"/>
</dbReference>
<dbReference type="GO" id="GO:0004654">
    <property type="term" value="F:polyribonucleotide nucleotidyltransferase activity"/>
    <property type="evidence" value="ECO:0007669"/>
    <property type="project" value="UniProtKB-UniRule"/>
</dbReference>
<dbReference type="GO" id="GO:0003723">
    <property type="term" value="F:RNA binding"/>
    <property type="evidence" value="ECO:0007669"/>
    <property type="project" value="UniProtKB-UniRule"/>
</dbReference>
<dbReference type="GO" id="GO:0006402">
    <property type="term" value="P:mRNA catabolic process"/>
    <property type="evidence" value="ECO:0007669"/>
    <property type="project" value="UniProtKB-UniRule"/>
</dbReference>
<dbReference type="GO" id="GO:0006396">
    <property type="term" value="P:RNA processing"/>
    <property type="evidence" value="ECO:0007669"/>
    <property type="project" value="InterPro"/>
</dbReference>
<dbReference type="CDD" id="cd02393">
    <property type="entry name" value="KH-I_PNPase"/>
    <property type="match status" value="1"/>
</dbReference>
<dbReference type="CDD" id="cd11363">
    <property type="entry name" value="RNase_PH_PNPase_1"/>
    <property type="match status" value="1"/>
</dbReference>
<dbReference type="CDD" id="cd11364">
    <property type="entry name" value="RNase_PH_PNPase_2"/>
    <property type="match status" value="1"/>
</dbReference>
<dbReference type="CDD" id="cd04472">
    <property type="entry name" value="S1_PNPase"/>
    <property type="match status" value="1"/>
</dbReference>
<dbReference type="FunFam" id="2.40.50.140:FF:000023">
    <property type="entry name" value="Polyribonucleotide nucleotidyltransferase"/>
    <property type="match status" value="1"/>
</dbReference>
<dbReference type="FunFam" id="3.30.1370.10:FF:000001">
    <property type="entry name" value="Polyribonucleotide nucleotidyltransferase"/>
    <property type="match status" value="1"/>
</dbReference>
<dbReference type="FunFam" id="3.30.230.70:FF:000001">
    <property type="entry name" value="Polyribonucleotide nucleotidyltransferase"/>
    <property type="match status" value="1"/>
</dbReference>
<dbReference type="FunFam" id="3.30.230.70:FF:000002">
    <property type="entry name" value="Polyribonucleotide nucleotidyltransferase"/>
    <property type="match status" value="1"/>
</dbReference>
<dbReference type="Gene3D" id="3.30.230.70">
    <property type="entry name" value="GHMP Kinase, N-terminal domain"/>
    <property type="match status" value="2"/>
</dbReference>
<dbReference type="Gene3D" id="3.30.1370.10">
    <property type="entry name" value="K Homology domain, type 1"/>
    <property type="match status" value="1"/>
</dbReference>
<dbReference type="Gene3D" id="2.40.50.140">
    <property type="entry name" value="Nucleic acid-binding proteins"/>
    <property type="match status" value="1"/>
</dbReference>
<dbReference type="HAMAP" id="MF_01595">
    <property type="entry name" value="PNPase"/>
    <property type="match status" value="1"/>
</dbReference>
<dbReference type="InterPro" id="IPR001247">
    <property type="entry name" value="ExoRNase_PH_dom1"/>
</dbReference>
<dbReference type="InterPro" id="IPR015847">
    <property type="entry name" value="ExoRNase_PH_dom2"/>
</dbReference>
<dbReference type="InterPro" id="IPR036345">
    <property type="entry name" value="ExoRNase_PH_dom2_sf"/>
</dbReference>
<dbReference type="InterPro" id="IPR004087">
    <property type="entry name" value="KH_dom"/>
</dbReference>
<dbReference type="InterPro" id="IPR004088">
    <property type="entry name" value="KH_dom_type_1"/>
</dbReference>
<dbReference type="InterPro" id="IPR036612">
    <property type="entry name" value="KH_dom_type_1_sf"/>
</dbReference>
<dbReference type="InterPro" id="IPR012340">
    <property type="entry name" value="NA-bd_OB-fold"/>
</dbReference>
<dbReference type="InterPro" id="IPR012162">
    <property type="entry name" value="PNPase"/>
</dbReference>
<dbReference type="InterPro" id="IPR027408">
    <property type="entry name" value="PNPase/RNase_PH_dom_sf"/>
</dbReference>
<dbReference type="InterPro" id="IPR015848">
    <property type="entry name" value="PNPase_PH_RNA-bd_bac/org-type"/>
</dbReference>
<dbReference type="InterPro" id="IPR036456">
    <property type="entry name" value="PNPase_PH_RNA-bd_sf"/>
</dbReference>
<dbReference type="InterPro" id="IPR020568">
    <property type="entry name" value="Ribosomal_Su5_D2-typ_SF"/>
</dbReference>
<dbReference type="InterPro" id="IPR003029">
    <property type="entry name" value="S1_domain"/>
</dbReference>
<dbReference type="NCBIfam" id="TIGR03591">
    <property type="entry name" value="polynuc_phos"/>
    <property type="match status" value="1"/>
</dbReference>
<dbReference type="NCBIfam" id="NF008805">
    <property type="entry name" value="PRK11824.1"/>
    <property type="match status" value="1"/>
</dbReference>
<dbReference type="PANTHER" id="PTHR11252">
    <property type="entry name" value="POLYRIBONUCLEOTIDE NUCLEOTIDYLTRANSFERASE"/>
    <property type="match status" value="1"/>
</dbReference>
<dbReference type="PANTHER" id="PTHR11252:SF0">
    <property type="entry name" value="POLYRIBONUCLEOTIDE NUCLEOTIDYLTRANSFERASE 1, MITOCHONDRIAL"/>
    <property type="match status" value="1"/>
</dbReference>
<dbReference type="Pfam" id="PF00013">
    <property type="entry name" value="KH_1"/>
    <property type="match status" value="1"/>
</dbReference>
<dbReference type="Pfam" id="PF03726">
    <property type="entry name" value="PNPase"/>
    <property type="match status" value="1"/>
</dbReference>
<dbReference type="Pfam" id="PF01138">
    <property type="entry name" value="RNase_PH"/>
    <property type="match status" value="2"/>
</dbReference>
<dbReference type="Pfam" id="PF03725">
    <property type="entry name" value="RNase_PH_C"/>
    <property type="match status" value="2"/>
</dbReference>
<dbReference type="Pfam" id="PF00575">
    <property type="entry name" value="S1"/>
    <property type="match status" value="1"/>
</dbReference>
<dbReference type="PIRSF" id="PIRSF005499">
    <property type="entry name" value="PNPase"/>
    <property type="match status" value="1"/>
</dbReference>
<dbReference type="SMART" id="SM00322">
    <property type="entry name" value="KH"/>
    <property type="match status" value="1"/>
</dbReference>
<dbReference type="SMART" id="SM00316">
    <property type="entry name" value="S1"/>
    <property type="match status" value="1"/>
</dbReference>
<dbReference type="SUPFAM" id="SSF54791">
    <property type="entry name" value="Eukaryotic type KH-domain (KH-domain type I)"/>
    <property type="match status" value="1"/>
</dbReference>
<dbReference type="SUPFAM" id="SSF50249">
    <property type="entry name" value="Nucleic acid-binding proteins"/>
    <property type="match status" value="1"/>
</dbReference>
<dbReference type="SUPFAM" id="SSF46915">
    <property type="entry name" value="Polynucleotide phosphorylase/guanosine pentaphosphate synthase (PNPase/GPSI), domain 3"/>
    <property type="match status" value="1"/>
</dbReference>
<dbReference type="SUPFAM" id="SSF55666">
    <property type="entry name" value="Ribonuclease PH domain 2-like"/>
    <property type="match status" value="2"/>
</dbReference>
<dbReference type="SUPFAM" id="SSF54211">
    <property type="entry name" value="Ribosomal protein S5 domain 2-like"/>
    <property type="match status" value="2"/>
</dbReference>
<dbReference type="PROSITE" id="PS50084">
    <property type="entry name" value="KH_TYPE_1"/>
    <property type="match status" value="1"/>
</dbReference>
<dbReference type="PROSITE" id="PS50126">
    <property type="entry name" value="S1"/>
    <property type="match status" value="1"/>
</dbReference>
<sequence length="711" mass="77039">MLNPIVRKFQYGQHTVTLETGMMARQATAAVMVSMDDTAVFVTVVGQKKAKPGQDFFPLTVNYQERTYAAGRIPGSFFRREGRPSEGETLIARLIDRPVRPLFPEGFVNEVQVIATVVSVNPQVNPDIVAMIGASAALSLSGIPFNGPIGAARVGYINDQYVLNPTQDELKESKLDLVVAGTEAAVLMVESEAELLSEDTMLGAVVFGHEQQQVVIQAINDLVKEAGKPRWDWQPEAVNDALNARVAALAESRLSDAYRITDKQERYAQVDVIKSETIEQLIAEDETLDANELGEILHAIEKNVVRSRVLAGEPRIDGREKDMIRGLDVRTGVLPRTHGSALFTRGETQALVTATLGTARDAQVLDELMGERTDSFLFHYNFPPYSVGETGMVGSPKRREIGHGRLAKRGVLAVMPDMDKFPYTVRVVSEITESNGSSSMASVCGASLALMDAGVPIKAAVAGIAMGLVKEGDNYVVLSDILGDEDHLGDMDFKVAGSRDGISALQMDIKIEGITKEIMQVALNQAKGARLHILGVMEQAINAPRGDISEFAPRIHTIKISTDKIKDVIGKGGSVIRALTEETGTTIEIEDDGTVKIAATDGEKAKYAIRRIEEITAEIEVGRIYNGKVTRIVDFGAFVAIGGGKEGLVHISQIADKRVEKVTDYLQMGQEVPVKVLEVDRQGRVRLSIKEATEQSQPAAAPEAPASEQAE</sequence>